<organism>
    <name type="scientific">Serratia proteamaculans (strain 568)</name>
    <dbReference type="NCBI Taxonomy" id="399741"/>
    <lineage>
        <taxon>Bacteria</taxon>
        <taxon>Pseudomonadati</taxon>
        <taxon>Pseudomonadota</taxon>
        <taxon>Gammaproteobacteria</taxon>
        <taxon>Enterobacterales</taxon>
        <taxon>Yersiniaceae</taxon>
        <taxon>Serratia</taxon>
    </lineage>
</organism>
<reference key="1">
    <citation type="submission" date="2007-09" db="EMBL/GenBank/DDBJ databases">
        <title>Complete sequence of chromosome of Serratia proteamaculans 568.</title>
        <authorList>
            <consortium name="US DOE Joint Genome Institute"/>
            <person name="Copeland A."/>
            <person name="Lucas S."/>
            <person name="Lapidus A."/>
            <person name="Barry K."/>
            <person name="Glavina del Rio T."/>
            <person name="Dalin E."/>
            <person name="Tice H."/>
            <person name="Pitluck S."/>
            <person name="Chain P."/>
            <person name="Malfatti S."/>
            <person name="Shin M."/>
            <person name="Vergez L."/>
            <person name="Schmutz J."/>
            <person name="Larimer F."/>
            <person name="Land M."/>
            <person name="Hauser L."/>
            <person name="Kyrpides N."/>
            <person name="Kim E."/>
            <person name="Taghavi S."/>
            <person name="Newman L."/>
            <person name="Vangronsveld J."/>
            <person name="van der Lelie D."/>
            <person name="Richardson P."/>
        </authorList>
    </citation>
    <scope>NUCLEOTIDE SEQUENCE [LARGE SCALE GENOMIC DNA]</scope>
    <source>
        <strain>568</strain>
    </source>
</reference>
<name>RNH_SERP5</name>
<protein>
    <recommendedName>
        <fullName evidence="1">Ribonuclease H</fullName>
        <shortName evidence="1">RNase H</shortName>
        <ecNumber evidence="1">3.1.26.4</ecNumber>
    </recommendedName>
</protein>
<evidence type="ECO:0000255" key="1">
    <source>
        <dbReference type="HAMAP-Rule" id="MF_00042"/>
    </source>
</evidence>
<evidence type="ECO:0000255" key="2">
    <source>
        <dbReference type="PROSITE-ProRule" id="PRU00408"/>
    </source>
</evidence>
<feature type="chain" id="PRO_1000074664" description="Ribonuclease H">
    <location>
        <begin position="1"/>
        <end position="155"/>
    </location>
</feature>
<feature type="domain" description="RNase H type-1" evidence="2">
    <location>
        <begin position="1"/>
        <end position="142"/>
    </location>
</feature>
<feature type="binding site" evidence="1">
    <location>
        <position position="10"/>
    </location>
    <ligand>
        <name>Mg(2+)</name>
        <dbReference type="ChEBI" id="CHEBI:18420"/>
        <label>1</label>
    </ligand>
</feature>
<feature type="binding site" evidence="1">
    <location>
        <position position="10"/>
    </location>
    <ligand>
        <name>Mg(2+)</name>
        <dbReference type="ChEBI" id="CHEBI:18420"/>
        <label>2</label>
    </ligand>
</feature>
<feature type="binding site" evidence="1">
    <location>
        <position position="48"/>
    </location>
    <ligand>
        <name>Mg(2+)</name>
        <dbReference type="ChEBI" id="CHEBI:18420"/>
        <label>1</label>
    </ligand>
</feature>
<feature type="binding site" evidence="1">
    <location>
        <position position="70"/>
    </location>
    <ligand>
        <name>Mg(2+)</name>
        <dbReference type="ChEBI" id="CHEBI:18420"/>
        <label>1</label>
    </ligand>
</feature>
<feature type="binding site" evidence="1">
    <location>
        <position position="134"/>
    </location>
    <ligand>
        <name>Mg(2+)</name>
        <dbReference type="ChEBI" id="CHEBI:18420"/>
        <label>2</label>
    </ligand>
</feature>
<comment type="function">
    <text evidence="1">Endonuclease that specifically degrades the RNA of RNA-DNA hybrids.</text>
</comment>
<comment type="catalytic activity">
    <reaction evidence="1">
        <text>Endonucleolytic cleavage to 5'-phosphomonoester.</text>
        <dbReference type="EC" id="3.1.26.4"/>
    </reaction>
</comment>
<comment type="cofactor">
    <cofactor evidence="1">
        <name>Mg(2+)</name>
        <dbReference type="ChEBI" id="CHEBI:18420"/>
    </cofactor>
    <text evidence="1">Binds 1 Mg(2+) ion per subunit. May bind a second metal ion at a regulatory site, or after substrate binding.</text>
</comment>
<comment type="subunit">
    <text evidence="1">Monomer.</text>
</comment>
<comment type="subcellular location">
    <subcellularLocation>
        <location evidence="1">Cytoplasm</location>
    </subcellularLocation>
</comment>
<comment type="similarity">
    <text evidence="1">Belongs to the RNase H family.</text>
</comment>
<gene>
    <name evidence="1" type="primary">rnhA</name>
    <name type="ordered locus">Spro_0911</name>
</gene>
<sequence length="155" mass="17520">MLKQVEIFTDGSCLGNPGPGGYGAILRYKQTEKTFSAGFRLTTNNRMEMMAAIVALEALTTPCEVTLSTDSQYVRQGITTWIHNWKKRGWKTADKKPVKNVDLWQRLDLAIQRHTVKWEWVKGHAGHPENERCDVLARDAASNPTQDDVGYKPES</sequence>
<proteinExistence type="inferred from homology"/>
<accession>A8GA77</accession>
<dbReference type="EC" id="3.1.26.4" evidence="1"/>
<dbReference type="EMBL" id="CP000826">
    <property type="protein sequence ID" value="ABV40017.1"/>
    <property type="molecule type" value="Genomic_DNA"/>
</dbReference>
<dbReference type="SMR" id="A8GA77"/>
<dbReference type="STRING" id="399741.Spro_0911"/>
<dbReference type="KEGG" id="spe:Spro_0911"/>
<dbReference type="eggNOG" id="COG0328">
    <property type="taxonomic scope" value="Bacteria"/>
</dbReference>
<dbReference type="HOGENOM" id="CLU_030894_6_0_6"/>
<dbReference type="OrthoDB" id="7845843at2"/>
<dbReference type="GO" id="GO:0005737">
    <property type="term" value="C:cytoplasm"/>
    <property type="evidence" value="ECO:0007669"/>
    <property type="project" value="UniProtKB-SubCell"/>
</dbReference>
<dbReference type="GO" id="GO:0000287">
    <property type="term" value="F:magnesium ion binding"/>
    <property type="evidence" value="ECO:0007669"/>
    <property type="project" value="UniProtKB-UniRule"/>
</dbReference>
<dbReference type="GO" id="GO:0003676">
    <property type="term" value="F:nucleic acid binding"/>
    <property type="evidence" value="ECO:0007669"/>
    <property type="project" value="InterPro"/>
</dbReference>
<dbReference type="GO" id="GO:0004523">
    <property type="term" value="F:RNA-DNA hybrid ribonuclease activity"/>
    <property type="evidence" value="ECO:0007669"/>
    <property type="project" value="UniProtKB-UniRule"/>
</dbReference>
<dbReference type="GO" id="GO:0043137">
    <property type="term" value="P:DNA replication, removal of RNA primer"/>
    <property type="evidence" value="ECO:0007669"/>
    <property type="project" value="TreeGrafter"/>
</dbReference>
<dbReference type="CDD" id="cd09278">
    <property type="entry name" value="RNase_HI_prokaryote_like"/>
    <property type="match status" value="1"/>
</dbReference>
<dbReference type="FunFam" id="3.30.420.10:FF:000008">
    <property type="entry name" value="Ribonuclease H"/>
    <property type="match status" value="1"/>
</dbReference>
<dbReference type="Gene3D" id="3.30.420.10">
    <property type="entry name" value="Ribonuclease H-like superfamily/Ribonuclease H"/>
    <property type="match status" value="1"/>
</dbReference>
<dbReference type="HAMAP" id="MF_00042">
    <property type="entry name" value="RNase_H"/>
    <property type="match status" value="1"/>
</dbReference>
<dbReference type="InterPro" id="IPR050092">
    <property type="entry name" value="RNase_H"/>
</dbReference>
<dbReference type="InterPro" id="IPR012337">
    <property type="entry name" value="RNaseH-like_sf"/>
</dbReference>
<dbReference type="InterPro" id="IPR002156">
    <property type="entry name" value="RNaseH_domain"/>
</dbReference>
<dbReference type="InterPro" id="IPR036397">
    <property type="entry name" value="RNaseH_sf"/>
</dbReference>
<dbReference type="InterPro" id="IPR022892">
    <property type="entry name" value="RNaseHI"/>
</dbReference>
<dbReference type="NCBIfam" id="NF001236">
    <property type="entry name" value="PRK00203.1"/>
    <property type="match status" value="1"/>
</dbReference>
<dbReference type="PANTHER" id="PTHR10642">
    <property type="entry name" value="RIBONUCLEASE H1"/>
    <property type="match status" value="1"/>
</dbReference>
<dbReference type="PANTHER" id="PTHR10642:SF26">
    <property type="entry name" value="RIBONUCLEASE H1"/>
    <property type="match status" value="1"/>
</dbReference>
<dbReference type="Pfam" id="PF00075">
    <property type="entry name" value="RNase_H"/>
    <property type="match status" value="1"/>
</dbReference>
<dbReference type="SUPFAM" id="SSF53098">
    <property type="entry name" value="Ribonuclease H-like"/>
    <property type="match status" value="1"/>
</dbReference>
<dbReference type="PROSITE" id="PS50879">
    <property type="entry name" value="RNASE_H_1"/>
    <property type="match status" value="1"/>
</dbReference>
<keyword id="KW-0963">Cytoplasm</keyword>
<keyword id="KW-0255">Endonuclease</keyword>
<keyword id="KW-0378">Hydrolase</keyword>
<keyword id="KW-0460">Magnesium</keyword>
<keyword id="KW-0479">Metal-binding</keyword>
<keyword id="KW-0540">Nuclease</keyword>